<reference key="1">
    <citation type="submission" date="2006-09" db="EMBL/GenBank/DDBJ databases">
        <title>Complete sequence of chromosome 1 of Shewanella sp. ANA-3.</title>
        <authorList>
            <person name="Copeland A."/>
            <person name="Lucas S."/>
            <person name="Lapidus A."/>
            <person name="Barry K."/>
            <person name="Detter J.C."/>
            <person name="Glavina del Rio T."/>
            <person name="Hammon N."/>
            <person name="Israni S."/>
            <person name="Dalin E."/>
            <person name="Tice H."/>
            <person name="Pitluck S."/>
            <person name="Chertkov O."/>
            <person name="Brettin T."/>
            <person name="Bruce D."/>
            <person name="Han C."/>
            <person name="Tapia R."/>
            <person name="Gilna P."/>
            <person name="Schmutz J."/>
            <person name="Larimer F."/>
            <person name="Land M."/>
            <person name="Hauser L."/>
            <person name="Kyrpides N."/>
            <person name="Kim E."/>
            <person name="Newman D."/>
            <person name="Salticov C."/>
            <person name="Konstantinidis K."/>
            <person name="Klappenback J."/>
            <person name="Tiedje J."/>
            <person name="Richardson P."/>
        </authorList>
    </citation>
    <scope>NUCLEOTIDE SEQUENCE [LARGE SCALE GENOMIC DNA]</scope>
    <source>
        <strain>ANA-3</strain>
    </source>
</reference>
<dbReference type="EMBL" id="CP000469">
    <property type="protein sequence ID" value="ABK46461.1"/>
    <property type="molecule type" value="Genomic_DNA"/>
</dbReference>
<dbReference type="RefSeq" id="WP_007644440.1">
    <property type="nucleotide sequence ID" value="NC_008577.1"/>
</dbReference>
<dbReference type="SMR" id="A0KRP2"/>
<dbReference type="STRING" id="94122.Shewana3_0217"/>
<dbReference type="GeneID" id="94726204"/>
<dbReference type="KEGG" id="shn:Shewana3_0217"/>
<dbReference type="eggNOG" id="COG1841">
    <property type="taxonomic scope" value="Bacteria"/>
</dbReference>
<dbReference type="HOGENOM" id="CLU_131047_1_4_6"/>
<dbReference type="OrthoDB" id="9812790at2"/>
<dbReference type="Proteomes" id="UP000002589">
    <property type="component" value="Chromosome"/>
</dbReference>
<dbReference type="GO" id="GO:0022625">
    <property type="term" value="C:cytosolic large ribosomal subunit"/>
    <property type="evidence" value="ECO:0007669"/>
    <property type="project" value="TreeGrafter"/>
</dbReference>
<dbReference type="GO" id="GO:0003735">
    <property type="term" value="F:structural constituent of ribosome"/>
    <property type="evidence" value="ECO:0007669"/>
    <property type="project" value="InterPro"/>
</dbReference>
<dbReference type="GO" id="GO:0006412">
    <property type="term" value="P:translation"/>
    <property type="evidence" value="ECO:0007669"/>
    <property type="project" value="UniProtKB-UniRule"/>
</dbReference>
<dbReference type="CDD" id="cd01658">
    <property type="entry name" value="Ribosomal_L30"/>
    <property type="match status" value="1"/>
</dbReference>
<dbReference type="FunFam" id="3.30.1390.20:FF:000001">
    <property type="entry name" value="50S ribosomal protein L30"/>
    <property type="match status" value="1"/>
</dbReference>
<dbReference type="Gene3D" id="3.30.1390.20">
    <property type="entry name" value="Ribosomal protein L30, ferredoxin-like fold domain"/>
    <property type="match status" value="1"/>
</dbReference>
<dbReference type="HAMAP" id="MF_01371_B">
    <property type="entry name" value="Ribosomal_uL30_B"/>
    <property type="match status" value="1"/>
</dbReference>
<dbReference type="InterPro" id="IPR036919">
    <property type="entry name" value="Ribo_uL30_ferredoxin-like_sf"/>
</dbReference>
<dbReference type="InterPro" id="IPR005996">
    <property type="entry name" value="Ribosomal_uL30_bac-type"/>
</dbReference>
<dbReference type="InterPro" id="IPR018038">
    <property type="entry name" value="Ribosomal_uL30_CS"/>
</dbReference>
<dbReference type="InterPro" id="IPR016082">
    <property type="entry name" value="Ribosomal_uL30_ferredoxin-like"/>
</dbReference>
<dbReference type="NCBIfam" id="TIGR01308">
    <property type="entry name" value="rpmD_bact"/>
    <property type="match status" value="1"/>
</dbReference>
<dbReference type="PANTHER" id="PTHR15892:SF2">
    <property type="entry name" value="LARGE RIBOSOMAL SUBUNIT PROTEIN UL30M"/>
    <property type="match status" value="1"/>
</dbReference>
<dbReference type="PANTHER" id="PTHR15892">
    <property type="entry name" value="MITOCHONDRIAL RIBOSOMAL PROTEIN L30"/>
    <property type="match status" value="1"/>
</dbReference>
<dbReference type="Pfam" id="PF00327">
    <property type="entry name" value="Ribosomal_L30"/>
    <property type="match status" value="1"/>
</dbReference>
<dbReference type="PIRSF" id="PIRSF002211">
    <property type="entry name" value="Ribosomal_L30_bac-type"/>
    <property type="match status" value="1"/>
</dbReference>
<dbReference type="SUPFAM" id="SSF55129">
    <property type="entry name" value="Ribosomal protein L30p/L7e"/>
    <property type="match status" value="1"/>
</dbReference>
<dbReference type="PROSITE" id="PS00634">
    <property type="entry name" value="RIBOSOMAL_L30"/>
    <property type="match status" value="1"/>
</dbReference>
<protein>
    <recommendedName>
        <fullName evidence="1">Large ribosomal subunit protein uL30</fullName>
    </recommendedName>
    <alternativeName>
        <fullName evidence="2">50S ribosomal protein L30</fullName>
    </alternativeName>
</protein>
<evidence type="ECO:0000255" key="1">
    <source>
        <dbReference type="HAMAP-Rule" id="MF_01371"/>
    </source>
</evidence>
<evidence type="ECO:0000305" key="2"/>
<name>RL30_SHESA</name>
<sequence length="60" mass="6697">MATKTVKVTQTKSAIGRLPKHRATLTGLGLRRIGHTVELEDTPSVRGMINKVYYMVKVED</sequence>
<comment type="subunit">
    <text evidence="1">Part of the 50S ribosomal subunit.</text>
</comment>
<comment type="similarity">
    <text evidence="1">Belongs to the universal ribosomal protein uL30 family.</text>
</comment>
<organism>
    <name type="scientific">Shewanella sp. (strain ANA-3)</name>
    <dbReference type="NCBI Taxonomy" id="94122"/>
    <lineage>
        <taxon>Bacteria</taxon>
        <taxon>Pseudomonadati</taxon>
        <taxon>Pseudomonadota</taxon>
        <taxon>Gammaproteobacteria</taxon>
        <taxon>Alteromonadales</taxon>
        <taxon>Shewanellaceae</taxon>
        <taxon>Shewanella</taxon>
    </lineage>
</organism>
<feature type="chain" id="PRO_1000056109" description="Large ribosomal subunit protein uL30">
    <location>
        <begin position="1"/>
        <end position="60"/>
    </location>
</feature>
<proteinExistence type="inferred from homology"/>
<keyword id="KW-0687">Ribonucleoprotein</keyword>
<keyword id="KW-0689">Ribosomal protein</keyword>
<accession>A0KRP2</accession>
<gene>
    <name evidence="1" type="primary">rpmD</name>
    <name type="ordered locus">Shewana3_0217</name>
</gene>